<comment type="function">
    <text evidence="1">Catalyzes oxygen-dependent 5-hydroxyuridine (ho5U) modification at position 34 in tRNAs.</text>
</comment>
<comment type="catalytic activity">
    <reaction evidence="1">
        <text>uridine(34) in tRNA + AH2 + O2 = 5-hydroxyuridine(34) in tRNA + A + H2O</text>
        <dbReference type="Rhea" id="RHEA:64224"/>
        <dbReference type="Rhea" id="RHEA-COMP:11727"/>
        <dbReference type="Rhea" id="RHEA-COMP:13381"/>
        <dbReference type="ChEBI" id="CHEBI:13193"/>
        <dbReference type="ChEBI" id="CHEBI:15377"/>
        <dbReference type="ChEBI" id="CHEBI:15379"/>
        <dbReference type="ChEBI" id="CHEBI:17499"/>
        <dbReference type="ChEBI" id="CHEBI:65315"/>
        <dbReference type="ChEBI" id="CHEBI:136877"/>
    </reaction>
</comment>
<comment type="similarity">
    <text evidence="1">Belongs to the TrhO family.</text>
</comment>
<dbReference type="EC" id="1.14.-.-" evidence="1"/>
<dbReference type="EMBL" id="FM242711">
    <property type="protein sequence ID" value="CAS05156.1"/>
    <property type="molecule type" value="Genomic_DNA"/>
</dbReference>
<dbReference type="RefSeq" id="WP_003725947.1">
    <property type="nucleotide sequence ID" value="NC_012488.1"/>
</dbReference>
<dbReference type="SMR" id="C1L2U0"/>
<dbReference type="KEGG" id="lmc:Lm4b_01393"/>
<dbReference type="HOGENOM" id="CLU_038878_1_0_9"/>
<dbReference type="GO" id="GO:0016705">
    <property type="term" value="F:oxidoreductase activity, acting on paired donors, with incorporation or reduction of molecular oxygen"/>
    <property type="evidence" value="ECO:0007669"/>
    <property type="project" value="UniProtKB-UniRule"/>
</dbReference>
<dbReference type="GO" id="GO:0006400">
    <property type="term" value="P:tRNA modification"/>
    <property type="evidence" value="ECO:0007669"/>
    <property type="project" value="UniProtKB-UniRule"/>
</dbReference>
<dbReference type="CDD" id="cd01518">
    <property type="entry name" value="RHOD_YceA"/>
    <property type="match status" value="1"/>
</dbReference>
<dbReference type="Gene3D" id="3.30.70.100">
    <property type="match status" value="1"/>
</dbReference>
<dbReference type="Gene3D" id="3.40.250.10">
    <property type="entry name" value="Rhodanese-like domain"/>
    <property type="match status" value="1"/>
</dbReference>
<dbReference type="HAMAP" id="MF_00469">
    <property type="entry name" value="TrhO"/>
    <property type="match status" value="1"/>
</dbReference>
<dbReference type="InterPro" id="IPR001763">
    <property type="entry name" value="Rhodanese-like_dom"/>
</dbReference>
<dbReference type="InterPro" id="IPR036873">
    <property type="entry name" value="Rhodanese-like_dom_sf"/>
</dbReference>
<dbReference type="InterPro" id="IPR022111">
    <property type="entry name" value="Rhodanese_C"/>
</dbReference>
<dbReference type="InterPro" id="IPR020936">
    <property type="entry name" value="TrhO"/>
</dbReference>
<dbReference type="InterPro" id="IPR040503">
    <property type="entry name" value="TRHO_N"/>
</dbReference>
<dbReference type="NCBIfam" id="NF001135">
    <property type="entry name" value="PRK00142.1-3"/>
    <property type="match status" value="1"/>
</dbReference>
<dbReference type="PANTHER" id="PTHR43268:SF3">
    <property type="entry name" value="RHODANESE-LIKE DOMAIN-CONTAINING PROTEIN 7-RELATED"/>
    <property type="match status" value="1"/>
</dbReference>
<dbReference type="PANTHER" id="PTHR43268">
    <property type="entry name" value="THIOSULFATE SULFURTRANSFERASE/RHODANESE-LIKE DOMAIN-CONTAINING PROTEIN 2"/>
    <property type="match status" value="1"/>
</dbReference>
<dbReference type="Pfam" id="PF00581">
    <property type="entry name" value="Rhodanese"/>
    <property type="match status" value="1"/>
</dbReference>
<dbReference type="Pfam" id="PF12368">
    <property type="entry name" value="Rhodanese_C"/>
    <property type="match status" value="1"/>
</dbReference>
<dbReference type="Pfam" id="PF17773">
    <property type="entry name" value="UPF0176_N"/>
    <property type="match status" value="1"/>
</dbReference>
<dbReference type="SMART" id="SM00450">
    <property type="entry name" value="RHOD"/>
    <property type="match status" value="1"/>
</dbReference>
<dbReference type="SUPFAM" id="SSF52821">
    <property type="entry name" value="Rhodanese/Cell cycle control phosphatase"/>
    <property type="match status" value="1"/>
</dbReference>
<dbReference type="PROSITE" id="PS50206">
    <property type="entry name" value="RHODANESE_3"/>
    <property type="match status" value="1"/>
</dbReference>
<evidence type="ECO:0000255" key="1">
    <source>
        <dbReference type="HAMAP-Rule" id="MF_00469"/>
    </source>
</evidence>
<sequence length="319" mass="36428">MSDYQVLLYYKYTTIDDPETFAKEHLAACKEMELKGRILVATEGINGTVSGTVEATNKYMDYMANDARFADMVFKIDAADAHAFKKMHVRPRAEIVSLSLEEDVNPLEVTGTYLEPSEFREALLDEDTVILDARNDYEFDIGHFRGAVRPDIQNFRELPGWIEDNREQLADKKIVTYCTGGIRCEKFSGWLKTAGFDDVSQLHGGIATYGKNEETKGELWDGQMYVFDERIAVPINQVNPTIVGKDYFDGTPCERYINCANPYCNKQILASIENEKKYLRSCSHDCRVHPANLYTKNLSKEEFTERLQAIDETLPEMVQ</sequence>
<reference key="1">
    <citation type="journal article" date="2012" name="BMC Genomics">
        <title>Comparative genomics and transcriptomics of lineages I, II, and III strains of Listeria monocytogenes.</title>
        <authorList>
            <person name="Hain T."/>
            <person name="Ghai R."/>
            <person name="Billion A."/>
            <person name="Kuenne C.T."/>
            <person name="Steinweg C."/>
            <person name="Izar B."/>
            <person name="Mohamed W."/>
            <person name="Mraheil M."/>
            <person name="Domann E."/>
            <person name="Schaffrath S."/>
            <person name="Karst U."/>
            <person name="Goesmann A."/>
            <person name="Oehm S."/>
            <person name="Puhler A."/>
            <person name="Merkl R."/>
            <person name="Vorwerk S."/>
            <person name="Glaser P."/>
            <person name="Garrido P."/>
            <person name="Rusniok C."/>
            <person name="Buchrieser C."/>
            <person name="Goebel W."/>
            <person name="Chakraborty T."/>
        </authorList>
    </citation>
    <scope>NUCLEOTIDE SEQUENCE [LARGE SCALE GENOMIC DNA]</scope>
    <source>
        <strain>CLIP80459</strain>
    </source>
</reference>
<gene>
    <name evidence="1" type="primary">trhO</name>
    <name type="ordered locus">Lm4b_01393</name>
</gene>
<proteinExistence type="inferred from homology"/>
<protein>
    <recommendedName>
        <fullName evidence="1">tRNA uridine(34) hydroxylase</fullName>
        <ecNumber evidence="1">1.14.-.-</ecNumber>
    </recommendedName>
    <alternativeName>
        <fullName evidence="1">tRNA hydroxylation protein O</fullName>
    </alternativeName>
</protein>
<organism>
    <name type="scientific">Listeria monocytogenes serotype 4b (strain CLIP80459)</name>
    <dbReference type="NCBI Taxonomy" id="568819"/>
    <lineage>
        <taxon>Bacteria</taxon>
        <taxon>Bacillati</taxon>
        <taxon>Bacillota</taxon>
        <taxon>Bacilli</taxon>
        <taxon>Bacillales</taxon>
        <taxon>Listeriaceae</taxon>
        <taxon>Listeria</taxon>
    </lineage>
</organism>
<accession>C1L2U0</accession>
<feature type="chain" id="PRO_1000206337" description="tRNA uridine(34) hydroxylase">
    <location>
        <begin position="1"/>
        <end position="319"/>
    </location>
</feature>
<feature type="domain" description="Rhodanese" evidence="1">
    <location>
        <begin position="124"/>
        <end position="218"/>
    </location>
</feature>
<feature type="active site" description="Cysteine persulfide intermediate" evidence="1">
    <location>
        <position position="178"/>
    </location>
</feature>
<keyword id="KW-0560">Oxidoreductase</keyword>
<keyword id="KW-0819">tRNA processing</keyword>
<name>TRHO_LISMC</name>